<evidence type="ECO:0000255" key="1">
    <source>
        <dbReference type="HAMAP-Rule" id="MF_00059"/>
    </source>
</evidence>
<dbReference type="EC" id="2.7.7.6" evidence="1"/>
<dbReference type="EMBL" id="CP000712">
    <property type="protein sequence ID" value="ABQ76682.1"/>
    <property type="molecule type" value="Genomic_DNA"/>
</dbReference>
<dbReference type="SMR" id="A5VXS2"/>
<dbReference type="KEGG" id="ppf:Pput_0512"/>
<dbReference type="eggNOG" id="COG0202">
    <property type="taxonomic scope" value="Bacteria"/>
</dbReference>
<dbReference type="HOGENOM" id="CLU_053084_0_1_6"/>
<dbReference type="GO" id="GO:0005737">
    <property type="term" value="C:cytoplasm"/>
    <property type="evidence" value="ECO:0007669"/>
    <property type="project" value="UniProtKB-ARBA"/>
</dbReference>
<dbReference type="GO" id="GO:0000428">
    <property type="term" value="C:DNA-directed RNA polymerase complex"/>
    <property type="evidence" value="ECO:0007669"/>
    <property type="project" value="UniProtKB-KW"/>
</dbReference>
<dbReference type="GO" id="GO:0003677">
    <property type="term" value="F:DNA binding"/>
    <property type="evidence" value="ECO:0007669"/>
    <property type="project" value="UniProtKB-UniRule"/>
</dbReference>
<dbReference type="GO" id="GO:0003899">
    <property type="term" value="F:DNA-directed RNA polymerase activity"/>
    <property type="evidence" value="ECO:0007669"/>
    <property type="project" value="UniProtKB-UniRule"/>
</dbReference>
<dbReference type="GO" id="GO:0046983">
    <property type="term" value="F:protein dimerization activity"/>
    <property type="evidence" value="ECO:0007669"/>
    <property type="project" value="InterPro"/>
</dbReference>
<dbReference type="GO" id="GO:0006351">
    <property type="term" value="P:DNA-templated transcription"/>
    <property type="evidence" value="ECO:0007669"/>
    <property type="project" value="UniProtKB-UniRule"/>
</dbReference>
<dbReference type="CDD" id="cd06928">
    <property type="entry name" value="RNAP_alpha_NTD"/>
    <property type="match status" value="1"/>
</dbReference>
<dbReference type="FunFam" id="1.10.150.20:FF:000001">
    <property type="entry name" value="DNA-directed RNA polymerase subunit alpha"/>
    <property type="match status" value="1"/>
</dbReference>
<dbReference type="FunFam" id="2.170.120.12:FF:000001">
    <property type="entry name" value="DNA-directed RNA polymerase subunit alpha"/>
    <property type="match status" value="1"/>
</dbReference>
<dbReference type="Gene3D" id="1.10.150.20">
    <property type="entry name" value="5' to 3' exonuclease, C-terminal subdomain"/>
    <property type="match status" value="1"/>
</dbReference>
<dbReference type="Gene3D" id="2.170.120.12">
    <property type="entry name" value="DNA-directed RNA polymerase, insert domain"/>
    <property type="match status" value="1"/>
</dbReference>
<dbReference type="Gene3D" id="3.30.1360.10">
    <property type="entry name" value="RNA polymerase, RBP11-like subunit"/>
    <property type="match status" value="1"/>
</dbReference>
<dbReference type="HAMAP" id="MF_00059">
    <property type="entry name" value="RNApol_bact_RpoA"/>
    <property type="match status" value="1"/>
</dbReference>
<dbReference type="InterPro" id="IPR011262">
    <property type="entry name" value="DNA-dir_RNA_pol_insert"/>
</dbReference>
<dbReference type="InterPro" id="IPR011263">
    <property type="entry name" value="DNA-dir_RNA_pol_RpoA/D/Rpb3"/>
</dbReference>
<dbReference type="InterPro" id="IPR011773">
    <property type="entry name" value="DNA-dir_RpoA"/>
</dbReference>
<dbReference type="InterPro" id="IPR036603">
    <property type="entry name" value="RBP11-like"/>
</dbReference>
<dbReference type="InterPro" id="IPR011260">
    <property type="entry name" value="RNAP_asu_C"/>
</dbReference>
<dbReference type="InterPro" id="IPR036643">
    <property type="entry name" value="RNApol_insert_sf"/>
</dbReference>
<dbReference type="NCBIfam" id="NF003513">
    <property type="entry name" value="PRK05182.1-2"/>
    <property type="match status" value="1"/>
</dbReference>
<dbReference type="NCBIfam" id="NF003519">
    <property type="entry name" value="PRK05182.2-5"/>
    <property type="match status" value="1"/>
</dbReference>
<dbReference type="NCBIfam" id="TIGR02027">
    <property type="entry name" value="rpoA"/>
    <property type="match status" value="1"/>
</dbReference>
<dbReference type="Pfam" id="PF01000">
    <property type="entry name" value="RNA_pol_A_bac"/>
    <property type="match status" value="1"/>
</dbReference>
<dbReference type="Pfam" id="PF03118">
    <property type="entry name" value="RNA_pol_A_CTD"/>
    <property type="match status" value="1"/>
</dbReference>
<dbReference type="Pfam" id="PF01193">
    <property type="entry name" value="RNA_pol_L"/>
    <property type="match status" value="1"/>
</dbReference>
<dbReference type="SMART" id="SM00662">
    <property type="entry name" value="RPOLD"/>
    <property type="match status" value="1"/>
</dbReference>
<dbReference type="SUPFAM" id="SSF47789">
    <property type="entry name" value="C-terminal domain of RNA polymerase alpha subunit"/>
    <property type="match status" value="1"/>
</dbReference>
<dbReference type="SUPFAM" id="SSF56553">
    <property type="entry name" value="Insert subdomain of RNA polymerase alpha subunit"/>
    <property type="match status" value="1"/>
</dbReference>
<dbReference type="SUPFAM" id="SSF55257">
    <property type="entry name" value="RBP11-like subunits of RNA polymerase"/>
    <property type="match status" value="1"/>
</dbReference>
<feature type="chain" id="PRO_0000323648" description="DNA-directed RNA polymerase subunit alpha">
    <location>
        <begin position="1"/>
        <end position="333"/>
    </location>
</feature>
<feature type="region of interest" description="Alpha N-terminal domain (alpha-NTD)" evidence="1">
    <location>
        <begin position="1"/>
        <end position="234"/>
    </location>
</feature>
<feature type="region of interest" description="Alpha C-terminal domain (alpha-CTD)" evidence="1">
    <location>
        <begin position="248"/>
        <end position="333"/>
    </location>
</feature>
<proteinExistence type="inferred from homology"/>
<name>RPOA_PSEP1</name>
<protein>
    <recommendedName>
        <fullName evidence="1">DNA-directed RNA polymerase subunit alpha</fullName>
        <shortName evidence="1">RNAP subunit alpha</shortName>
        <ecNumber evidence="1">2.7.7.6</ecNumber>
    </recommendedName>
    <alternativeName>
        <fullName evidence="1">RNA polymerase subunit alpha</fullName>
    </alternativeName>
    <alternativeName>
        <fullName evidence="1">Transcriptase subunit alpha</fullName>
    </alternativeName>
</protein>
<accession>A5VXS2</accession>
<gene>
    <name evidence="1" type="primary">rpoA</name>
    <name type="ordered locus">Pput_0512</name>
</gene>
<sequence>MQISVNEFLTPRHIDVQVVSPTRAKITLEPLERGFGHTLGNALRRILLSSMPGCAVVEAEIDGVLHEYSAIEGVQEDVIEILLNLKGLAIKLHGRDEVTLTLSKKGSGVVTAADIQLDHDVEIVNPDHVIANLASNGALNMKLTVARGRGYEPADSRQTDEDESRSIGRLQLDASFSPVRRIAYVVENARVEQRTNLDKLVIDLETNGTLDPEEAIRRAATILQQQLAAFVDLKGDSEPVVVEQEDEIDPILLRPVDDLELTVRSANCLKAENIYYIGDLIQRTEVELLKTPNLGKKSLTEIKDVLASRGLSLGMRLDNWPPASLKKDDKATA</sequence>
<keyword id="KW-0240">DNA-directed RNA polymerase</keyword>
<keyword id="KW-0548">Nucleotidyltransferase</keyword>
<keyword id="KW-0804">Transcription</keyword>
<keyword id="KW-0808">Transferase</keyword>
<organism>
    <name type="scientific">Pseudomonas putida (strain ATCC 700007 / DSM 6899 / JCM 31910 / BCRC 17059 / LMG 24140 / F1)</name>
    <dbReference type="NCBI Taxonomy" id="351746"/>
    <lineage>
        <taxon>Bacteria</taxon>
        <taxon>Pseudomonadati</taxon>
        <taxon>Pseudomonadota</taxon>
        <taxon>Gammaproteobacteria</taxon>
        <taxon>Pseudomonadales</taxon>
        <taxon>Pseudomonadaceae</taxon>
        <taxon>Pseudomonas</taxon>
    </lineage>
</organism>
<reference key="1">
    <citation type="submission" date="2007-05" db="EMBL/GenBank/DDBJ databases">
        <title>Complete sequence of Pseudomonas putida F1.</title>
        <authorList>
            <consortium name="US DOE Joint Genome Institute"/>
            <person name="Copeland A."/>
            <person name="Lucas S."/>
            <person name="Lapidus A."/>
            <person name="Barry K."/>
            <person name="Detter J.C."/>
            <person name="Glavina del Rio T."/>
            <person name="Hammon N."/>
            <person name="Israni S."/>
            <person name="Dalin E."/>
            <person name="Tice H."/>
            <person name="Pitluck S."/>
            <person name="Chain P."/>
            <person name="Malfatti S."/>
            <person name="Shin M."/>
            <person name="Vergez L."/>
            <person name="Schmutz J."/>
            <person name="Larimer F."/>
            <person name="Land M."/>
            <person name="Hauser L."/>
            <person name="Kyrpides N."/>
            <person name="Lykidis A."/>
            <person name="Parales R."/>
            <person name="Richardson P."/>
        </authorList>
    </citation>
    <scope>NUCLEOTIDE SEQUENCE [LARGE SCALE GENOMIC DNA]</scope>
    <source>
        <strain>ATCC 700007 / DSM 6899 / JCM 31910 / BCRC 17059 / LMG 24140 / F1</strain>
    </source>
</reference>
<comment type="function">
    <text evidence="1">DNA-dependent RNA polymerase catalyzes the transcription of DNA into RNA using the four ribonucleoside triphosphates as substrates.</text>
</comment>
<comment type="catalytic activity">
    <reaction evidence="1">
        <text>RNA(n) + a ribonucleoside 5'-triphosphate = RNA(n+1) + diphosphate</text>
        <dbReference type="Rhea" id="RHEA:21248"/>
        <dbReference type="Rhea" id="RHEA-COMP:14527"/>
        <dbReference type="Rhea" id="RHEA-COMP:17342"/>
        <dbReference type="ChEBI" id="CHEBI:33019"/>
        <dbReference type="ChEBI" id="CHEBI:61557"/>
        <dbReference type="ChEBI" id="CHEBI:140395"/>
        <dbReference type="EC" id="2.7.7.6"/>
    </reaction>
</comment>
<comment type="subunit">
    <text evidence="1">Homodimer. The RNAP catalytic core consists of 2 alpha, 1 beta, 1 beta' and 1 omega subunit. When a sigma factor is associated with the core the holoenzyme is formed, which can initiate transcription.</text>
</comment>
<comment type="domain">
    <text evidence="1">The N-terminal domain is essential for RNAP assembly and basal transcription, whereas the C-terminal domain is involved in interaction with transcriptional regulators and with upstream promoter elements.</text>
</comment>
<comment type="similarity">
    <text evidence="1">Belongs to the RNA polymerase alpha chain family.</text>
</comment>